<protein>
    <recommendedName>
        <fullName evidence="2">Sulfopyruvate decarboxylase subunit beta</fullName>
        <ecNumber evidence="1">4.1.1.79</ecNumber>
    </recommendedName>
</protein>
<dbReference type="EC" id="4.1.1.79" evidence="1"/>
<dbReference type="EMBL" id="L77117">
    <property type="status" value="NOT_ANNOTATED_CDS"/>
    <property type="molecule type" value="Genomic_DNA"/>
</dbReference>
<dbReference type="PIR" id="A64332">
    <property type="entry name" value="A64332"/>
</dbReference>
<dbReference type="RefSeq" id="WP_064496438.1">
    <property type="nucleotide sequence ID" value="NC_000909.1"/>
</dbReference>
<dbReference type="SMR" id="P58416"/>
<dbReference type="GeneID" id="27929949"/>
<dbReference type="InParanoid" id="P58416"/>
<dbReference type="OrthoDB" id="77140at2157"/>
<dbReference type="PhylomeDB" id="P58416"/>
<dbReference type="BioCyc" id="MetaCyc:MONOMER-2266"/>
<dbReference type="SABIO-RK" id="P58416"/>
<dbReference type="UniPathway" id="UPA00355">
    <property type="reaction ID" value="UER00472"/>
</dbReference>
<dbReference type="Proteomes" id="UP000000805">
    <property type="component" value="Chromosome"/>
</dbReference>
<dbReference type="GO" id="GO:0050545">
    <property type="term" value="F:sulfopyruvate decarboxylase activity"/>
    <property type="evidence" value="ECO:0000314"/>
    <property type="project" value="MENGO"/>
</dbReference>
<dbReference type="GO" id="GO:0030976">
    <property type="term" value="F:thiamine pyrophosphate binding"/>
    <property type="evidence" value="ECO:0000314"/>
    <property type="project" value="UniProtKB"/>
</dbReference>
<dbReference type="GO" id="GO:0019295">
    <property type="term" value="P:coenzyme M biosynthetic process"/>
    <property type="evidence" value="ECO:0000314"/>
    <property type="project" value="UniProtKB"/>
</dbReference>
<dbReference type="CDD" id="cd03372">
    <property type="entry name" value="TPP_ComE"/>
    <property type="match status" value="1"/>
</dbReference>
<dbReference type="FunFam" id="3.40.50.970:FF:000095">
    <property type="entry name" value="Sulfopyruvate decarboxylase subunit beta"/>
    <property type="match status" value="1"/>
</dbReference>
<dbReference type="Gene3D" id="3.40.50.970">
    <property type="match status" value="1"/>
</dbReference>
<dbReference type="InterPro" id="IPR022494">
    <property type="entry name" value="Sulfopyruvate_deCO2ase_bsu"/>
</dbReference>
<dbReference type="InterPro" id="IPR029061">
    <property type="entry name" value="THDP-binding"/>
</dbReference>
<dbReference type="InterPro" id="IPR051818">
    <property type="entry name" value="TPP_dependent_decarboxylase"/>
</dbReference>
<dbReference type="InterPro" id="IPR011766">
    <property type="entry name" value="TPP_enzyme_TPP-bd"/>
</dbReference>
<dbReference type="NCBIfam" id="TIGR03846">
    <property type="entry name" value="sulfopy_beta"/>
    <property type="match status" value="1"/>
</dbReference>
<dbReference type="PANTHER" id="PTHR42818:SF1">
    <property type="entry name" value="SULFOPYRUVATE DECARBOXYLASE"/>
    <property type="match status" value="1"/>
</dbReference>
<dbReference type="PANTHER" id="PTHR42818">
    <property type="entry name" value="SULFOPYRUVATE DECARBOXYLASE SUBUNIT ALPHA"/>
    <property type="match status" value="1"/>
</dbReference>
<dbReference type="Pfam" id="PF02775">
    <property type="entry name" value="TPP_enzyme_C"/>
    <property type="match status" value="1"/>
</dbReference>
<dbReference type="SUPFAM" id="SSF52518">
    <property type="entry name" value="Thiamin diphosphate-binding fold (THDP-binding)"/>
    <property type="match status" value="1"/>
</dbReference>
<proteinExistence type="evidence at protein level"/>
<keyword id="KW-0174">Coenzyme M biosynthesis</keyword>
<keyword id="KW-0210">Decarboxylase</keyword>
<keyword id="KW-0456">Lyase</keyword>
<keyword id="KW-1185">Reference proteome</keyword>
<keyword id="KW-0786">Thiamine pyrophosphate</keyword>
<gene>
    <name evidence="2" type="primary">comE</name>
    <name type="ordered locus">MJ0256</name>
</gene>
<feature type="chain" id="PRO_0000090839" description="Sulfopyruvate decarboxylase subunit beta">
    <location>
        <begin position="1"/>
        <end position="188"/>
    </location>
</feature>
<evidence type="ECO:0000269" key="1">
    <source>
    </source>
</evidence>
<evidence type="ECO:0000303" key="2">
    <source>
    </source>
</evidence>
<evidence type="ECO:0000305" key="3"/>
<evidence type="ECO:0000305" key="4">
    <source>
    </source>
</evidence>
<sequence>MYPKRIDIIKKIVENVGEKEIIVSNIGIPSKELYYVKDRERNFYMLGSMGLASSIGLGLALNCEDKVIVIDGDGSILMNLGSLSTIGYMNPKNYILVIIDNSAYGSTGNQKTHTGKNTNLEEIAKGCGLDTITTESLEEFEKEFKNALNEEKCKVIIAKTIPYNEKCSNIEIPPVVLKYRFMEAIKRS</sequence>
<accession>P58416</accession>
<accession>Q57704</accession>
<organism>
    <name type="scientific">Methanocaldococcus jannaschii (strain ATCC 43067 / DSM 2661 / JAL-1 / JCM 10045 / NBRC 100440)</name>
    <name type="common">Methanococcus jannaschii</name>
    <dbReference type="NCBI Taxonomy" id="243232"/>
    <lineage>
        <taxon>Archaea</taxon>
        <taxon>Methanobacteriati</taxon>
        <taxon>Methanobacteriota</taxon>
        <taxon>Methanomada group</taxon>
        <taxon>Methanococci</taxon>
        <taxon>Methanococcales</taxon>
        <taxon>Methanocaldococcaceae</taxon>
        <taxon>Methanocaldococcus</taxon>
    </lineage>
</organism>
<reference key="1">
    <citation type="journal article" date="1996" name="Science">
        <title>Complete genome sequence of the methanogenic archaeon, Methanococcus jannaschii.</title>
        <authorList>
            <person name="Bult C.J."/>
            <person name="White O."/>
            <person name="Olsen G.J."/>
            <person name="Zhou L."/>
            <person name="Fleischmann R.D."/>
            <person name="Sutton G.G."/>
            <person name="Blake J.A."/>
            <person name="FitzGerald L.M."/>
            <person name="Clayton R.A."/>
            <person name="Gocayne J.D."/>
            <person name="Kerlavage A.R."/>
            <person name="Dougherty B.A."/>
            <person name="Tomb J.-F."/>
            <person name="Adams M.D."/>
            <person name="Reich C.I."/>
            <person name="Overbeek R."/>
            <person name="Kirkness E.F."/>
            <person name="Weinstock K.G."/>
            <person name="Merrick J.M."/>
            <person name="Glodek A."/>
            <person name="Scott J.L."/>
            <person name="Geoghagen N.S.M."/>
            <person name="Weidman J.F."/>
            <person name="Fuhrmann J.L."/>
            <person name="Nguyen D."/>
            <person name="Utterback T.R."/>
            <person name="Kelley J.M."/>
            <person name="Peterson J.D."/>
            <person name="Sadow P.W."/>
            <person name="Hanna M.C."/>
            <person name="Cotton M.D."/>
            <person name="Roberts K.M."/>
            <person name="Hurst M.A."/>
            <person name="Kaine B.P."/>
            <person name="Borodovsky M."/>
            <person name="Klenk H.-P."/>
            <person name="Fraser C.M."/>
            <person name="Smith H.O."/>
            <person name="Woese C.R."/>
            <person name="Venter J.C."/>
        </authorList>
    </citation>
    <scope>NUCLEOTIDE SEQUENCE [LARGE SCALE GENOMIC DNA]</scope>
    <source>
        <strain>ATCC 43067 / DSM 2661 / JAL-1 / JCM 10045 / NBRC 100440</strain>
    </source>
</reference>
<reference key="2">
    <citation type="journal article" date="2000" name="J. Bacteriol.">
        <title>Identification of the gene encoding sulfopyruvate decarboxylase, an enzyme involved in biosynthesis of coenzyme M.</title>
        <authorList>
            <person name="Graupner M."/>
            <person name="Xu H."/>
            <person name="White R.H."/>
        </authorList>
    </citation>
    <scope>FUNCTION</scope>
    <scope>CATALYTIC ACTIVITY</scope>
    <scope>BIOPHYSICOCHEMICAL PROPERTIES</scope>
    <scope>ACTIVITY REGULATION</scope>
    <scope>SUBUNIT</scope>
    <scope>COFACTOR</scope>
</reference>
<name>COME_METJA</name>
<comment type="function">
    <text evidence="1">Involved in the biosynthesis of the coenzyme M (2-mercaptoethanesulfonic acid). Catalyzes the decarboxylation of sulfopyruvate to sulfoacetaldehyde.</text>
</comment>
<comment type="catalytic activity">
    <reaction evidence="1">
        <text>3-sulfopyruvate + H(+) = sulfoacetaldehyde + CO2</text>
        <dbReference type="Rhea" id="RHEA:20948"/>
        <dbReference type="ChEBI" id="CHEBI:15378"/>
        <dbReference type="ChEBI" id="CHEBI:16526"/>
        <dbReference type="ChEBI" id="CHEBI:57940"/>
        <dbReference type="ChEBI" id="CHEBI:58246"/>
        <dbReference type="EC" id="4.1.1.79"/>
    </reaction>
</comment>
<comment type="cofactor">
    <cofactor evidence="1">
        <name>thiamine diphosphate</name>
        <dbReference type="ChEBI" id="CHEBI:58937"/>
    </cofactor>
    <text evidence="1">Binds 1 thiamine pyrophosphate per subunit.</text>
</comment>
<comment type="activity regulation">
    <text evidence="1">Inhibited by oxygen when heated in air at 80 degrees Celsius. The enzyme is reactivated by addition of dithionite.</text>
</comment>
<comment type="biophysicochemical properties">
    <kinetics>
        <KM evidence="1">0.64 mM for 3-sulfopyruvate</KM>
        <Vmax evidence="1">52.0 umol/min/mg enzyme</Vmax>
    </kinetics>
</comment>
<comment type="pathway">
    <text evidence="4">Cofactor biosynthesis; coenzyme M biosynthesis; sulfoacetaldehyde from phosphoenolpyruvate and sulfite: step 4/4.</text>
</comment>
<comment type="subunit">
    <text evidence="1">Heterododecamer composed of 6 subunits alpha and 6 subunits beta.</text>
</comment>
<comment type="similarity">
    <text evidence="3">Belongs to the TPP enzyme family.</text>
</comment>
<comment type="caution">
    <text evidence="4">The sequence corresponding to this entry was originally entered in Swiss-Prot as AC Q57704 in November 1997 and was deleted in July 1999 because TIGR removed the CDS for that ORF. We have recreated it because of the evidence (PubMed:10940029) that it really exists.</text>
</comment>